<proteinExistence type="inferred from homology"/>
<name>CLPP_MANSM</name>
<organism>
    <name type="scientific">Mannheimia succiniciproducens (strain KCTC 0769BP / MBEL55E)</name>
    <dbReference type="NCBI Taxonomy" id="221988"/>
    <lineage>
        <taxon>Bacteria</taxon>
        <taxon>Pseudomonadati</taxon>
        <taxon>Pseudomonadota</taxon>
        <taxon>Gammaproteobacteria</taxon>
        <taxon>Pasteurellales</taxon>
        <taxon>Pasteurellaceae</taxon>
        <taxon>Basfia</taxon>
    </lineage>
</organism>
<reference key="1">
    <citation type="journal article" date="2004" name="Nat. Biotechnol.">
        <title>The genome sequence of the capnophilic rumen bacterium Mannheimia succiniciproducens.</title>
        <authorList>
            <person name="Hong S.H."/>
            <person name="Kim J.S."/>
            <person name="Lee S.Y."/>
            <person name="In Y.H."/>
            <person name="Choi S.S."/>
            <person name="Rih J.-K."/>
            <person name="Kim C.H."/>
            <person name="Jeong H."/>
            <person name="Hur C.G."/>
            <person name="Kim J.J."/>
        </authorList>
    </citation>
    <scope>NUCLEOTIDE SEQUENCE [LARGE SCALE GENOMIC DNA]</scope>
    <source>
        <strain>KCTC 0769BP / MBEL55E</strain>
    </source>
</reference>
<sequence length="193" mass="21372">MALIPMVVEQTSRGERSYDIYSRLLKERVIFLSGEVEDNMANLIVAQLLFLESENPEKDINLYINSPGGSVTAGMAIYDTMQFIKPDVRTLCVGQACSMGAFLLAGGAAGKRAALPHARVMIHQPLGGFRGQASDIQIHAQEILKIKQTLNERLAFHTGQPFEVIERDTDRDNFMSAEDAKNYGLIDSVLVKR</sequence>
<accession>Q65RF6</accession>
<protein>
    <recommendedName>
        <fullName evidence="1">ATP-dependent Clp protease proteolytic subunit</fullName>
        <ecNumber evidence="1">3.4.21.92</ecNumber>
    </recommendedName>
    <alternativeName>
        <fullName evidence="1">Endopeptidase Clp</fullName>
    </alternativeName>
</protein>
<comment type="function">
    <text evidence="1">Cleaves peptides in various proteins in a process that requires ATP hydrolysis. Has a chymotrypsin-like activity. Plays a major role in the degradation of misfolded proteins.</text>
</comment>
<comment type="catalytic activity">
    <reaction evidence="1">
        <text>Hydrolysis of proteins to small peptides in the presence of ATP and magnesium. alpha-casein is the usual test substrate. In the absence of ATP, only oligopeptides shorter than five residues are hydrolyzed (such as succinyl-Leu-Tyr-|-NHMec, and Leu-Tyr-Leu-|-Tyr-Trp, in which cleavage of the -Tyr-|-Leu- and -Tyr-|-Trp bonds also occurs).</text>
        <dbReference type="EC" id="3.4.21.92"/>
    </reaction>
</comment>
<comment type="subunit">
    <text evidence="1">Fourteen ClpP subunits assemble into 2 heptameric rings which stack back to back to give a disk-like structure with a central cavity, resembling the structure of eukaryotic proteasomes.</text>
</comment>
<comment type="subcellular location">
    <subcellularLocation>
        <location evidence="1">Cytoplasm</location>
    </subcellularLocation>
</comment>
<comment type="similarity">
    <text evidence="1">Belongs to the peptidase S14 family.</text>
</comment>
<feature type="chain" id="PRO_0000179587" description="ATP-dependent Clp protease proteolytic subunit">
    <location>
        <begin position="1"/>
        <end position="193"/>
    </location>
</feature>
<feature type="active site" description="Nucleophile" evidence="1">
    <location>
        <position position="98"/>
    </location>
</feature>
<feature type="active site" evidence="1">
    <location>
        <position position="123"/>
    </location>
</feature>
<dbReference type="EC" id="3.4.21.92" evidence="1"/>
<dbReference type="EMBL" id="AE016827">
    <property type="protein sequence ID" value="AAU38454.1"/>
    <property type="molecule type" value="Genomic_DNA"/>
</dbReference>
<dbReference type="RefSeq" id="WP_011201010.1">
    <property type="nucleotide sequence ID" value="NC_006300.1"/>
</dbReference>
<dbReference type="SMR" id="Q65RF6"/>
<dbReference type="STRING" id="221988.MS1847"/>
<dbReference type="MEROPS" id="S14.001"/>
<dbReference type="KEGG" id="msu:MS1847"/>
<dbReference type="eggNOG" id="COG0740">
    <property type="taxonomic scope" value="Bacteria"/>
</dbReference>
<dbReference type="HOGENOM" id="CLU_058707_3_2_6"/>
<dbReference type="OrthoDB" id="9802800at2"/>
<dbReference type="Proteomes" id="UP000000607">
    <property type="component" value="Chromosome"/>
</dbReference>
<dbReference type="GO" id="GO:0005737">
    <property type="term" value="C:cytoplasm"/>
    <property type="evidence" value="ECO:0007669"/>
    <property type="project" value="UniProtKB-SubCell"/>
</dbReference>
<dbReference type="GO" id="GO:0009368">
    <property type="term" value="C:endopeptidase Clp complex"/>
    <property type="evidence" value="ECO:0007669"/>
    <property type="project" value="TreeGrafter"/>
</dbReference>
<dbReference type="GO" id="GO:0004176">
    <property type="term" value="F:ATP-dependent peptidase activity"/>
    <property type="evidence" value="ECO:0007669"/>
    <property type="project" value="InterPro"/>
</dbReference>
<dbReference type="GO" id="GO:0051117">
    <property type="term" value="F:ATPase binding"/>
    <property type="evidence" value="ECO:0007669"/>
    <property type="project" value="TreeGrafter"/>
</dbReference>
<dbReference type="GO" id="GO:0004252">
    <property type="term" value="F:serine-type endopeptidase activity"/>
    <property type="evidence" value="ECO:0007669"/>
    <property type="project" value="UniProtKB-UniRule"/>
</dbReference>
<dbReference type="GO" id="GO:0006515">
    <property type="term" value="P:protein quality control for misfolded or incompletely synthesized proteins"/>
    <property type="evidence" value="ECO:0007669"/>
    <property type="project" value="TreeGrafter"/>
</dbReference>
<dbReference type="CDD" id="cd07017">
    <property type="entry name" value="S14_ClpP_2"/>
    <property type="match status" value="1"/>
</dbReference>
<dbReference type="FunFam" id="3.90.226.10:FF:000001">
    <property type="entry name" value="ATP-dependent Clp protease proteolytic subunit"/>
    <property type="match status" value="1"/>
</dbReference>
<dbReference type="Gene3D" id="3.90.226.10">
    <property type="entry name" value="2-enoyl-CoA Hydratase, Chain A, domain 1"/>
    <property type="match status" value="1"/>
</dbReference>
<dbReference type="HAMAP" id="MF_00444">
    <property type="entry name" value="ClpP"/>
    <property type="match status" value="1"/>
</dbReference>
<dbReference type="InterPro" id="IPR001907">
    <property type="entry name" value="ClpP"/>
</dbReference>
<dbReference type="InterPro" id="IPR029045">
    <property type="entry name" value="ClpP/crotonase-like_dom_sf"/>
</dbReference>
<dbReference type="InterPro" id="IPR023562">
    <property type="entry name" value="ClpP/TepA"/>
</dbReference>
<dbReference type="InterPro" id="IPR033135">
    <property type="entry name" value="ClpP_His_AS"/>
</dbReference>
<dbReference type="InterPro" id="IPR018215">
    <property type="entry name" value="ClpP_Ser_AS"/>
</dbReference>
<dbReference type="NCBIfam" id="TIGR00493">
    <property type="entry name" value="clpP"/>
    <property type="match status" value="1"/>
</dbReference>
<dbReference type="NCBIfam" id="NF001368">
    <property type="entry name" value="PRK00277.1"/>
    <property type="match status" value="1"/>
</dbReference>
<dbReference type="NCBIfam" id="NF009205">
    <property type="entry name" value="PRK12553.1"/>
    <property type="match status" value="1"/>
</dbReference>
<dbReference type="PANTHER" id="PTHR10381">
    <property type="entry name" value="ATP-DEPENDENT CLP PROTEASE PROTEOLYTIC SUBUNIT"/>
    <property type="match status" value="1"/>
</dbReference>
<dbReference type="PANTHER" id="PTHR10381:SF70">
    <property type="entry name" value="ATP-DEPENDENT CLP PROTEASE PROTEOLYTIC SUBUNIT"/>
    <property type="match status" value="1"/>
</dbReference>
<dbReference type="Pfam" id="PF00574">
    <property type="entry name" value="CLP_protease"/>
    <property type="match status" value="1"/>
</dbReference>
<dbReference type="PRINTS" id="PR00127">
    <property type="entry name" value="CLPPROTEASEP"/>
</dbReference>
<dbReference type="SUPFAM" id="SSF52096">
    <property type="entry name" value="ClpP/crotonase"/>
    <property type="match status" value="1"/>
</dbReference>
<dbReference type="PROSITE" id="PS00382">
    <property type="entry name" value="CLP_PROTEASE_HIS"/>
    <property type="match status" value="1"/>
</dbReference>
<dbReference type="PROSITE" id="PS00381">
    <property type="entry name" value="CLP_PROTEASE_SER"/>
    <property type="match status" value="1"/>
</dbReference>
<gene>
    <name evidence="1" type="primary">clpP</name>
    <name type="ordered locus">MS1847</name>
</gene>
<keyword id="KW-0963">Cytoplasm</keyword>
<keyword id="KW-0378">Hydrolase</keyword>
<keyword id="KW-0645">Protease</keyword>
<keyword id="KW-0720">Serine protease</keyword>
<evidence type="ECO:0000255" key="1">
    <source>
        <dbReference type="HAMAP-Rule" id="MF_00444"/>
    </source>
</evidence>